<name>UPP_BURTA</name>
<protein>
    <recommendedName>
        <fullName evidence="1">Uracil phosphoribosyltransferase</fullName>
        <ecNumber evidence="1">2.4.2.9</ecNumber>
    </recommendedName>
    <alternativeName>
        <fullName evidence="1">UMP pyrophosphorylase</fullName>
    </alternativeName>
    <alternativeName>
        <fullName evidence="1">UPRTase</fullName>
    </alternativeName>
</protein>
<feature type="chain" id="PRO_1000053691" description="Uracil phosphoribosyltransferase">
    <location>
        <begin position="1"/>
        <end position="216"/>
    </location>
</feature>
<feature type="binding site" evidence="1">
    <location>
        <position position="85"/>
    </location>
    <ligand>
        <name>5-phospho-alpha-D-ribose 1-diphosphate</name>
        <dbReference type="ChEBI" id="CHEBI:58017"/>
    </ligand>
</feature>
<feature type="binding site" evidence="1">
    <location>
        <position position="110"/>
    </location>
    <ligand>
        <name>5-phospho-alpha-D-ribose 1-diphosphate</name>
        <dbReference type="ChEBI" id="CHEBI:58017"/>
    </ligand>
</feature>
<feature type="binding site" evidence="1">
    <location>
        <begin position="135"/>
        <end position="143"/>
    </location>
    <ligand>
        <name>5-phospho-alpha-D-ribose 1-diphosphate</name>
        <dbReference type="ChEBI" id="CHEBI:58017"/>
    </ligand>
</feature>
<feature type="binding site" evidence="1">
    <location>
        <position position="200"/>
    </location>
    <ligand>
        <name>uracil</name>
        <dbReference type="ChEBI" id="CHEBI:17568"/>
    </ligand>
</feature>
<feature type="binding site" evidence="1">
    <location>
        <begin position="205"/>
        <end position="207"/>
    </location>
    <ligand>
        <name>uracil</name>
        <dbReference type="ChEBI" id="CHEBI:17568"/>
    </ligand>
</feature>
<feature type="binding site" evidence="1">
    <location>
        <position position="206"/>
    </location>
    <ligand>
        <name>5-phospho-alpha-D-ribose 1-diphosphate</name>
        <dbReference type="ChEBI" id="CHEBI:58017"/>
    </ligand>
</feature>
<keyword id="KW-0021">Allosteric enzyme</keyword>
<keyword id="KW-0328">Glycosyltransferase</keyword>
<keyword id="KW-0342">GTP-binding</keyword>
<keyword id="KW-0460">Magnesium</keyword>
<keyword id="KW-0547">Nucleotide-binding</keyword>
<keyword id="KW-0808">Transferase</keyword>
<evidence type="ECO:0000255" key="1">
    <source>
        <dbReference type="HAMAP-Rule" id="MF_01218"/>
    </source>
</evidence>
<proteinExistence type="inferred from homology"/>
<accession>Q2SZS9</accession>
<reference key="1">
    <citation type="journal article" date="2005" name="BMC Genomics">
        <title>Bacterial genome adaptation to niches: divergence of the potential virulence genes in three Burkholderia species of different survival strategies.</title>
        <authorList>
            <person name="Kim H.S."/>
            <person name="Schell M.A."/>
            <person name="Yu Y."/>
            <person name="Ulrich R.L."/>
            <person name="Sarria S.H."/>
            <person name="Nierman W.C."/>
            <person name="DeShazer D."/>
        </authorList>
    </citation>
    <scope>NUCLEOTIDE SEQUENCE [LARGE SCALE GENOMIC DNA]</scope>
    <source>
        <strain>ATCC 700388 / DSM 13276 / CCUG 48851 / CIP 106301 / E264</strain>
    </source>
</reference>
<organism>
    <name type="scientific">Burkholderia thailandensis (strain ATCC 700388 / DSM 13276 / CCUG 48851 / CIP 106301 / E264)</name>
    <dbReference type="NCBI Taxonomy" id="271848"/>
    <lineage>
        <taxon>Bacteria</taxon>
        <taxon>Pseudomonadati</taxon>
        <taxon>Pseudomonadota</taxon>
        <taxon>Betaproteobacteria</taxon>
        <taxon>Burkholderiales</taxon>
        <taxon>Burkholderiaceae</taxon>
        <taxon>Burkholderia</taxon>
        <taxon>pseudomallei group</taxon>
    </lineage>
</organism>
<gene>
    <name evidence="1" type="primary">upp</name>
    <name type="ordered locus">BTH_I1016</name>
</gene>
<sequence>MKQDSRFPNLFILDHPLIQHKLTHMRDKDTSTRTFRELLREITLLMGYEITRNLPITTKRVETPLVEIDAPVIAGKKLAIVPVLRAGVGMSDGLLELIPSARVGHIGVYRADDHRPVEYLVRLPDLEDRIFILCDPMVATGYSAAHAIDVLKRRGVPGERIMFLALVAAPEGVQVFQDAHPDVKLYVASLDSHLDDHAYIVPGLGDAGDRLFGTKN</sequence>
<comment type="function">
    <text evidence="1">Catalyzes the conversion of uracil and 5-phospho-alpha-D-ribose 1-diphosphate (PRPP) to UMP and diphosphate.</text>
</comment>
<comment type="catalytic activity">
    <reaction evidence="1">
        <text>UMP + diphosphate = 5-phospho-alpha-D-ribose 1-diphosphate + uracil</text>
        <dbReference type="Rhea" id="RHEA:13017"/>
        <dbReference type="ChEBI" id="CHEBI:17568"/>
        <dbReference type="ChEBI" id="CHEBI:33019"/>
        <dbReference type="ChEBI" id="CHEBI:57865"/>
        <dbReference type="ChEBI" id="CHEBI:58017"/>
        <dbReference type="EC" id="2.4.2.9"/>
    </reaction>
</comment>
<comment type="cofactor">
    <cofactor evidence="1">
        <name>Mg(2+)</name>
        <dbReference type="ChEBI" id="CHEBI:18420"/>
    </cofactor>
    <text evidence="1">Binds 1 Mg(2+) ion per subunit. The magnesium is bound as Mg-PRPP.</text>
</comment>
<comment type="activity regulation">
    <text evidence="1">Allosterically activated by GTP.</text>
</comment>
<comment type="pathway">
    <text evidence="1">Pyrimidine metabolism; UMP biosynthesis via salvage pathway; UMP from uracil: step 1/1.</text>
</comment>
<comment type="similarity">
    <text evidence="1">Belongs to the UPRTase family.</text>
</comment>
<dbReference type="EC" id="2.4.2.9" evidence="1"/>
<dbReference type="EMBL" id="CP000086">
    <property type="protein sequence ID" value="ABC36968.1"/>
    <property type="molecule type" value="Genomic_DNA"/>
</dbReference>
<dbReference type="RefSeq" id="WP_009892273.1">
    <property type="nucleotide sequence ID" value="NZ_CP008785.1"/>
</dbReference>
<dbReference type="SMR" id="Q2SZS9"/>
<dbReference type="GeneID" id="45120767"/>
<dbReference type="KEGG" id="bte:BTH_I1016"/>
<dbReference type="HOGENOM" id="CLU_067096_2_2_4"/>
<dbReference type="UniPathway" id="UPA00574">
    <property type="reaction ID" value="UER00636"/>
</dbReference>
<dbReference type="Proteomes" id="UP000001930">
    <property type="component" value="Chromosome I"/>
</dbReference>
<dbReference type="GO" id="GO:0005525">
    <property type="term" value="F:GTP binding"/>
    <property type="evidence" value="ECO:0007669"/>
    <property type="project" value="UniProtKB-KW"/>
</dbReference>
<dbReference type="GO" id="GO:0000287">
    <property type="term" value="F:magnesium ion binding"/>
    <property type="evidence" value="ECO:0007669"/>
    <property type="project" value="UniProtKB-UniRule"/>
</dbReference>
<dbReference type="GO" id="GO:0004845">
    <property type="term" value="F:uracil phosphoribosyltransferase activity"/>
    <property type="evidence" value="ECO:0007669"/>
    <property type="project" value="UniProtKB-UniRule"/>
</dbReference>
<dbReference type="GO" id="GO:0044206">
    <property type="term" value="P:UMP salvage"/>
    <property type="evidence" value="ECO:0007669"/>
    <property type="project" value="UniProtKB-UniRule"/>
</dbReference>
<dbReference type="GO" id="GO:0006223">
    <property type="term" value="P:uracil salvage"/>
    <property type="evidence" value="ECO:0007669"/>
    <property type="project" value="InterPro"/>
</dbReference>
<dbReference type="CDD" id="cd06223">
    <property type="entry name" value="PRTases_typeI"/>
    <property type="match status" value="1"/>
</dbReference>
<dbReference type="FunFam" id="3.40.50.2020:FF:000003">
    <property type="entry name" value="Uracil phosphoribosyltransferase"/>
    <property type="match status" value="1"/>
</dbReference>
<dbReference type="Gene3D" id="3.40.50.2020">
    <property type="match status" value="1"/>
</dbReference>
<dbReference type="HAMAP" id="MF_01218_B">
    <property type="entry name" value="Upp_B"/>
    <property type="match status" value="1"/>
</dbReference>
<dbReference type="InterPro" id="IPR000836">
    <property type="entry name" value="PRibTrfase_dom"/>
</dbReference>
<dbReference type="InterPro" id="IPR029057">
    <property type="entry name" value="PRTase-like"/>
</dbReference>
<dbReference type="InterPro" id="IPR034332">
    <property type="entry name" value="Upp_B"/>
</dbReference>
<dbReference type="InterPro" id="IPR050054">
    <property type="entry name" value="UPRTase/APRTase"/>
</dbReference>
<dbReference type="InterPro" id="IPR005765">
    <property type="entry name" value="Ura_phspho_trans"/>
</dbReference>
<dbReference type="NCBIfam" id="NF001097">
    <property type="entry name" value="PRK00129.1"/>
    <property type="match status" value="1"/>
</dbReference>
<dbReference type="NCBIfam" id="TIGR01091">
    <property type="entry name" value="upp"/>
    <property type="match status" value="1"/>
</dbReference>
<dbReference type="PANTHER" id="PTHR32315">
    <property type="entry name" value="ADENINE PHOSPHORIBOSYLTRANSFERASE"/>
    <property type="match status" value="1"/>
</dbReference>
<dbReference type="PANTHER" id="PTHR32315:SF4">
    <property type="entry name" value="URACIL PHOSPHORIBOSYLTRANSFERASE, CHLOROPLASTIC"/>
    <property type="match status" value="1"/>
</dbReference>
<dbReference type="Pfam" id="PF14681">
    <property type="entry name" value="UPRTase"/>
    <property type="match status" value="1"/>
</dbReference>
<dbReference type="SUPFAM" id="SSF53271">
    <property type="entry name" value="PRTase-like"/>
    <property type="match status" value="1"/>
</dbReference>